<dbReference type="EMBL" id="U00090">
    <property type="protein sequence ID" value="AAB91906.1"/>
    <property type="molecule type" value="Genomic_DNA"/>
</dbReference>
<dbReference type="RefSeq" id="NP_444119.1">
    <property type="nucleotide sequence ID" value="NC_000914.2"/>
</dbReference>
<dbReference type="RefSeq" id="WP_010875147.1">
    <property type="nucleotide sequence ID" value="NC_000914.2"/>
</dbReference>
<dbReference type="KEGG" id="rhi:NGR_a01060"/>
<dbReference type="HOGENOM" id="CLU_1843529_0_0_5"/>
<dbReference type="OrthoDB" id="8279599at2"/>
<dbReference type="Proteomes" id="UP000001054">
    <property type="component" value="Plasmid pNGR234a"/>
</dbReference>
<accession>P55677</accession>
<feature type="chain" id="PRO_0000200954" description="Uncharacterized protein y4vR">
    <location>
        <begin position="1"/>
        <end position="139"/>
    </location>
</feature>
<keyword id="KW-0614">Plasmid</keyword>
<keyword id="KW-1185">Reference proteome</keyword>
<sequence>MAGLGQIAFGCEGGIDTCTAAQNTLAVFFDLGPKVGSVGRNLKSNSGRFILEPMPRDSAPAWYAIIRDFDADVPWRLKAFHTAAGLAIEPSVRSVYEGFAVLLTTGQSRIDRTPSVSLPIGSSLETEAITAIHAPKWRG</sequence>
<organism>
    <name type="scientific">Sinorhizobium fredii (strain NBRC 101917 / NGR234)</name>
    <dbReference type="NCBI Taxonomy" id="394"/>
    <lineage>
        <taxon>Bacteria</taxon>
        <taxon>Pseudomonadati</taxon>
        <taxon>Pseudomonadota</taxon>
        <taxon>Alphaproteobacteria</taxon>
        <taxon>Hyphomicrobiales</taxon>
        <taxon>Rhizobiaceae</taxon>
        <taxon>Sinorhizobium/Ensifer group</taxon>
        <taxon>Sinorhizobium</taxon>
    </lineage>
</organism>
<geneLocation type="plasmid">
    <name>sym pNGR234a</name>
</geneLocation>
<protein>
    <recommendedName>
        <fullName>Uncharacterized protein y4vR</fullName>
    </recommendedName>
</protein>
<gene>
    <name type="ordered locus">NGR_a01060</name>
    <name type="ORF">y4vR</name>
</gene>
<proteinExistence type="predicted"/>
<name>Y4VR_SINFN</name>
<reference key="1">
    <citation type="journal article" date="1997" name="Nature">
        <title>Molecular basis of symbiosis between Rhizobium and legumes.</title>
        <authorList>
            <person name="Freiberg C.A."/>
            <person name="Fellay R."/>
            <person name="Bairoch A."/>
            <person name="Broughton W.J."/>
            <person name="Rosenthal A."/>
            <person name="Perret X."/>
        </authorList>
    </citation>
    <scope>NUCLEOTIDE SEQUENCE [LARGE SCALE GENOMIC DNA]</scope>
    <source>
        <strain>NBRC 101917 / NGR234</strain>
    </source>
</reference>
<reference key="2">
    <citation type="journal article" date="2009" name="Appl. Environ. Microbiol.">
        <title>Rhizobium sp. strain NGR234 possesses a remarkable number of secretion systems.</title>
        <authorList>
            <person name="Schmeisser C."/>
            <person name="Liesegang H."/>
            <person name="Krysciak D."/>
            <person name="Bakkou N."/>
            <person name="Le Quere A."/>
            <person name="Wollherr A."/>
            <person name="Heinemeyer I."/>
            <person name="Morgenstern B."/>
            <person name="Pommerening-Roeser A."/>
            <person name="Flores M."/>
            <person name="Palacios R."/>
            <person name="Brenner S."/>
            <person name="Gottschalk G."/>
            <person name="Schmitz R.A."/>
            <person name="Broughton W.J."/>
            <person name="Perret X."/>
            <person name="Strittmatter A.W."/>
            <person name="Streit W.R."/>
        </authorList>
    </citation>
    <scope>NUCLEOTIDE SEQUENCE [LARGE SCALE GENOMIC DNA]</scope>
    <source>
        <strain>NBRC 101917 / NGR234</strain>
    </source>
</reference>